<accession>P46792</accession>
<organism>
    <name type="scientific">Agaricus bisporus</name>
    <name type="common">White button mushroom</name>
    <dbReference type="NCBI Taxonomy" id="5341"/>
    <lineage>
        <taxon>Eukaryota</taxon>
        <taxon>Fungi</taxon>
        <taxon>Dikarya</taxon>
        <taxon>Basidiomycota</taxon>
        <taxon>Agaricomycotina</taxon>
        <taxon>Agaricomycetes</taxon>
        <taxon>Agaricomycetidae</taxon>
        <taxon>Agaricales</taxon>
        <taxon>Agaricineae</taxon>
        <taxon>Agaricaceae</taxon>
        <taxon>Agaricus</taxon>
    </lineage>
</organism>
<keyword id="KW-0687">Ribonucleoprotein</keyword>
<keyword id="KW-0689">Ribosomal protein</keyword>
<feature type="chain" id="PRO_0000126615" description="Small ribosomal subunit protein uS8">
    <location>
        <begin position="1"/>
        <end position="130"/>
    </location>
</feature>
<gene>
    <name type="primary">rps22</name>
    <name type="synonym">rps15A</name>
</gene>
<name>RS22_AGABI</name>
<evidence type="ECO:0000305" key="1"/>
<protein>
    <recommendedName>
        <fullName evidence="1">Small ribosomal subunit protein uS8</fullName>
    </recommendedName>
    <alternativeName>
        <fullName>40S ribosomal protein S22</fullName>
    </alternativeName>
    <alternativeName>
        <fullName>Ribosomal protein S15a</fullName>
    </alternativeName>
</protein>
<dbReference type="EMBL" id="X79405">
    <property type="protein sequence ID" value="CAA55942.1"/>
    <property type="molecule type" value="mRNA"/>
</dbReference>
<dbReference type="SMR" id="P46792"/>
<dbReference type="OMA" id="LPAKNFG"/>
<dbReference type="GO" id="GO:1990904">
    <property type="term" value="C:ribonucleoprotein complex"/>
    <property type="evidence" value="ECO:0007669"/>
    <property type="project" value="UniProtKB-KW"/>
</dbReference>
<dbReference type="GO" id="GO:0005840">
    <property type="term" value="C:ribosome"/>
    <property type="evidence" value="ECO:0007669"/>
    <property type="project" value="UniProtKB-KW"/>
</dbReference>
<dbReference type="GO" id="GO:0003735">
    <property type="term" value="F:structural constituent of ribosome"/>
    <property type="evidence" value="ECO:0007669"/>
    <property type="project" value="InterPro"/>
</dbReference>
<dbReference type="GO" id="GO:0006412">
    <property type="term" value="P:translation"/>
    <property type="evidence" value="ECO:0007669"/>
    <property type="project" value="InterPro"/>
</dbReference>
<dbReference type="FunFam" id="3.30.1370.30:FF:000001">
    <property type="entry name" value="40S ribosomal protein S15a"/>
    <property type="match status" value="1"/>
</dbReference>
<dbReference type="FunFam" id="3.30.1490.10:FF:000002">
    <property type="entry name" value="40S ribosomal protein S15a"/>
    <property type="match status" value="1"/>
</dbReference>
<dbReference type="Gene3D" id="3.30.1370.30">
    <property type="match status" value="1"/>
</dbReference>
<dbReference type="Gene3D" id="3.30.1490.10">
    <property type="match status" value="1"/>
</dbReference>
<dbReference type="InterPro" id="IPR000630">
    <property type="entry name" value="Ribosomal_uS8"/>
</dbReference>
<dbReference type="InterPro" id="IPR047863">
    <property type="entry name" value="Ribosomal_uS8_CS"/>
</dbReference>
<dbReference type="InterPro" id="IPR035987">
    <property type="entry name" value="Ribosomal_uS8_sf"/>
</dbReference>
<dbReference type="NCBIfam" id="NF003115">
    <property type="entry name" value="PRK04034.1"/>
    <property type="match status" value="1"/>
</dbReference>
<dbReference type="PANTHER" id="PTHR11758">
    <property type="entry name" value="40S RIBOSOMAL PROTEIN S15A"/>
    <property type="match status" value="1"/>
</dbReference>
<dbReference type="Pfam" id="PF00410">
    <property type="entry name" value="Ribosomal_S8"/>
    <property type="match status" value="1"/>
</dbReference>
<dbReference type="SUPFAM" id="SSF56047">
    <property type="entry name" value="Ribosomal protein S8"/>
    <property type="match status" value="1"/>
</dbReference>
<dbReference type="PROSITE" id="PS00053">
    <property type="entry name" value="RIBOSOMAL_S8"/>
    <property type="match status" value="1"/>
</dbReference>
<sequence length="130" mass="14710">MVRISVLNDCLKSICNASRRGKRQVIVRPSSKVVVKFLSVMQRHGYIGEFEIIDDHRGGKIIVQLNGRLNKTGVISPRFNVQHNRIEQWINYLLPSRGIGIIVLTTSSGILDHEEARRKNVGGKLLGYVY</sequence>
<reference key="1">
    <citation type="journal article" date="1995" name="Exp. Mycol.">
        <title>Molecular cloning and sequence of the cytoplasmic ribosomal protein S15a gene from Agaricus bisporus.</title>
        <authorList>
            <person name="Schaap P.J."/>
            <person name="de Groot P.W.J."/>
            <person name="Mueller Y."/>
            <person name="van Griensven L.J.L.D."/>
            <person name="Visser J."/>
        </authorList>
    </citation>
    <scope>NUCLEOTIDE SEQUENCE [MRNA]</scope>
    <source>
        <strain>Horst U1</strain>
    </source>
</reference>
<proteinExistence type="evidence at transcript level"/>
<comment type="similarity">
    <text evidence="1">Belongs to the universal ribosomal protein uS8 family.</text>
</comment>